<keyword id="KW-0002">3D-structure</keyword>
<keyword id="KW-0963">Cytoplasm</keyword>
<keyword id="KW-1185">Reference proteome</keyword>
<keyword id="KW-0819">tRNA processing</keyword>
<evidence type="ECO:0000269" key="1">
    <source>
    </source>
</evidence>
<evidence type="ECO:0000269" key="2">
    <source>
    </source>
</evidence>
<evidence type="ECO:0000269" key="3">
    <source>
    </source>
</evidence>
<evidence type="ECO:0000305" key="4"/>
<evidence type="ECO:0000305" key="5">
    <source>
    </source>
</evidence>
<evidence type="ECO:0007829" key="6">
    <source>
        <dbReference type="PDB" id="1OKJ"/>
    </source>
</evidence>
<evidence type="ECO:0007829" key="7">
    <source>
        <dbReference type="PDB" id="6Z81"/>
    </source>
</evidence>
<accession>P76256</accession>
<accession>O08476</accession>
<accession>O08477</accession>
<organism>
    <name type="scientific">Escherichia coli (strain K12)</name>
    <dbReference type="NCBI Taxonomy" id="83333"/>
    <lineage>
        <taxon>Bacteria</taxon>
        <taxon>Pseudomonadati</taxon>
        <taxon>Pseudomonadota</taxon>
        <taxon>Gammaproteobacteria</taxon>
        <taxon>Enterobacterales</taxon>
        <taxon>Enterobacteriaceae</taxon>
        <taxon>Escherichia</taxon>
    </lineage>
</organism>
<reference key="1">
    <citation type="journal article" date="1996" name="DNA Res.">
        <title>A 460-kb DNA sequence of the Escherichia coli K-12 genome corresponding to the 40.1-50.0 min region on the linkage map.</title>
        <authorList>
            <person name="Itoh T."/>
            <person name="Aiba H."/>
            <person name="Baba T."/>
            <person name="Fujita K."/>
            <person name="Hayashi K."/>
            <person name="Inada T."/>
            <person name="Isono K."/>
            <person name="Kasai H."/>
            <person name="Kimura S."/>
            <person name="Kitakawa M."/>
            <person name="Kitagawa M."/>
            <person name="Makino K."/>
            <person name="Miki T."/>
            <person name="Mizobuchi K."/>
            <person name="Mori H."/>
            <person name="Mori T."/>
            <person name="Motomura K."/>
            <person name="Nakade S."/>
            <person name="Nakamura Y."/>
            <person name="Nashimoto H."/>
            <person name="Nishio Y."/>
            <person name="Oshima T."/>
            <person name="Saito N."/>
            <person name="Sampei G."/>
            <person name="Seki Y."/>
            <person name="Sivasundaram S."/>
            <person name="Tagami H."/>
            <person name="Takeda J."/>
            <person name="Takemoto K."/>
            <person name="Wada C."/>
            <person name="Yamamoto Y."/>
            <person name="Horiuchi T."/>
        </authorList>
    </citation>
    <scope>NUCLEOTIDE SEQUENCE [LARGE SCALE GENOMIC DNA]</scope>
    <source>
        <strain>K12 / W3110 / ATCC 27325 / DSM 5911</strain>
    </source>
</reference>
<reference key="2">
    <citation type="journal article" date="1997" name="Science">
        <title>The complete genome sequence of Escherichia coli K-12.</title>
        <authorList>
            <person name="Blattner F.R."/>
            <person name="Plunkett G. III"/>
            <person name="Bloch C.A."/>
            <person name="Perna N.T."/>
            <person name="Burland V."/>
            <person name="Riley M."/>
            <person name="Collado-Vides J."/>
            <person name="Glasner J.D."/>
            <person name="Rode C.K."/>
            <person name="Mayhew G.F."/>
            <person name="Gregor J."/>
            <person name="Davis N.W."/>
            <person name="Kirkpatrick H.A."/>
            <person name="Goeden M.A."/>
            <person name="Rose D.J."/>
            <person name="Mau B."/>
            <person name="Shao Y."/>
        </authorList>
    </citation>
    <scope>NUCLEOTIDE SEQUENCE [LARGE SCALE GENOMIC DNA]</scope>
    <source>
        <strain>K12 / MG1655 / ATCC 47076</strain>
    </source>
</reference>
<reference key="3">
    <citation type="journal article" date="2006" name="Mol. Syst. Biol.">
        <title>Highly accurate genome sequences of Escherichia coli K-12 strains MG1655 and W3110.</title>
        <authorList>
            <person name="Hayashi K."/>
            <person name="Morooka N."/>
            <person name="Yamamoto Y."/>
            <person name="Fujita K."/>
            <person name="Isono K."/>
            <person name="Choi S."/>
            <person name="Ohtsubo E."/>
            <person name="Baba T."/>
            <person name="Wanner B.L."/>
            <person name="Mori H."/>
            <person name="Horiuchi T."/>
        </authorList>
    </citation>
    <scope>NUCLEOTIDE SEQUENCE [LARGE SCALE GENOMIC DNA]</scope>
    <source>
        <strain>K12 / W3110 / ATCC 27325 / DSM 5911</strain>
    </source>
</reference>
<reference key="4">
    <citation type="journal article" date="2009" name="J. Bacteriol.">
        <title>Conserved network of proteins essential for bacterial viability.</title>
        <authorList>
            <person name="Handford J.I."/>
            <person name="Ize B."/>
            <person name="Buchanan G."/>
            <person name="Butland G.P."/>
            <person name="Greenblatt J."/>
            <person name="Emili A."/>
            <person name="Palmer T."/>
        </authorList>
    </citation>
    <scope>PROTEASE ACTIVITY</scope>
    <scope>FUNCTION</scope>
    <scope>DISRUPTION PHENOTYPE</scope>
    <scope>SUBUNIT</scope>
    <scope>INTERACTION WITH TSAD AND TSAE</scope>
    <scope>LACK OF GLYCOPROTEASE ACTIVITY</scope>
    <scope>SUBCELLULAR LOCATION</scope>
    <source>
        <strain>K12 / MC4100 / ATCC 35695 / DSM 6574</strain>
    </source>
</reference>
<reference key="5">
    <citation type="journal article" date="2010" name="BMC Genomics">
        <title>The Escherichia coli K-12 ORFeome: a resource for comparative molecular microbiology.</title>
        <authorList>
            <person name="Rajagopala S.V."/>
            <person name="Yamamoto N."/>
            <person name="Zweifel A.E."/>
            <person name="Nakamichi T."/>
            <person name="Huang H.K."/>
            <person name="Mendez-Rios J.D."/>
            <person name="Franca-Koh J."/>
            <person name="Boorgula M.P."/>
            <person name="Fujita K."/>
            <person name="Suzuki K."/>
            <person name="Hu J.C."/>
            <person name="Wanner B.L."/>
            <person name="Mori H."/>
            <person name="Uetz P."/>
        </authorList>
    </citation>
    <scope>INTERACTION WITH TSAD AND TSAE</scope>
    <source>
        <strain>K12</strain>
    </source>
</reference>
<reference key="6">
    <citation type="journal article" date="2012" name="J. Biol. Chem.">
        <title>Biosynthesis of threonylcarbamoyl adenosine (t6A), a universal tRNA nucleoside.</title>
        <authorList>
            <person name="Deutsch C."/>
            <person name="El Yacoubi B."/>
            <person name="de Crecy-Lagard V."/>
            <person name="Iwata-Reuyl D."/>
        </authorList>
    </citation>
    <scope>FUNCTION IN T(6)A37 FORMATION</scope>
    <scope>GENE NAME</scope>
    <scope>INTERACTION WITH TSAE; TSAD AND TSAC</scope>
    <source>
        <strain>K12</strain>
    </source>
</reference>
<reference key="7">
    <citation type="journal article" date="2005" name="Acta Crystallogr. F">
        <title>Preliminary crystallographic analysis of the Escherichia coli YeaZ protein using the anomalous signal of a gadolinium derivative.</title>
        <authorList>
            <person name="Jeudy S."/>
            <person name="Stelter M."/>
            <person name="Coutard B."/>
            <person name="Kahn R."/>
            <person name="Abergel C."/>
        </authorList>
    </citation>
    <scope>X-RAY CRYSTALLOGRAPHY (2.28 ANGSTROMS) OF 2-231</scope>
    <scope>IDENTIFICATION BY MASS SPECTROMETRY</scope>
</reference>
<proteinExistence type="evidence at protein level"/>
<name>TSAB_ECOLI</name>
<dbReference type="EMBL" id="U00096">
    <property type="protein sequence ID" value="AAC74877.1"/>
    <property type="molecule type" value="Genomic_DNA"/>
</dbReference>
<dbReference type="EMBL" id="AP009048">
    <property type="protein sequence ID" value="BAA15611.1"/>
    <property type="molecule type" value="Genomic_DNA"/>
</dbReference>
<dbReference type="PIR" id="G64941">
    <property type="entry name" value="G64941"/>
</dbReference>
<dbReference type="RefSeq" id="NP_416321.1">
    <property type="nucleotide sequence ID" value="NC_000913.3"/>
</dbReference>
<dbReference type="RefSeq" id="WP_001220966.1">
    <property type="nucleotide sequence ID" value="NZ_SSZK01000001.1"/>
</dbReference>
<dbReference type="PDB" id="1OKJ">
    <property type="method" value="X-ray"/>
    <property type="resolution" value="2.28 A"/>
    <property type="chains" value="A/B/C/D=2-231"/>
</dbReference>
<dbReference type="PDB" id="4WQ4">
    <property type="method" value="X-ray"/>
    <property type="resolution" value="2.33 A"/>
    <property type="chains" value="C/D=1-231"/>
</dbReference>
<dbReference type="PDB" id="4WQ5">
    <property type="method" value="X-ray"/>
    <property type="resolution" value="2.33 A"/>
    <property type="chains" value="C/D=1-231"/>
</dbReference>
<dbReference type="PDB" id="4YDU">
    <property type="method" value="X-ray"/>
    <property type="resolution" value="2.33 A"/>
    <property type="chains" value="C/D=1-231"/>
</dbReference>
<dbReference type="PDB" id="6Z81">
    <property type="method" value="X-ray"/>
    <property type="resolution" value="2.31 A"/>
    <property type="chains" value="C/D=1-231"/>
</dbReference>
<dbReference type="PDBsum" id="1OKJ"/>
<dbReference type="PDBsum" id="4WQ4"/>
<dbReference type="PDBsum" id="4WQ5"/>
<dbReference type="PDBsum" id="4YDU"/>
<dbReference type="PDBsum" id="6Z81"/>
<dbReference type="SMR" id="P76256"/>
<dbReference type="BioGRID" id="4260340">
    <property type="interactions" value="22"/>
</dbReference>
<dbReference type="BioGRID" id="850661">
    <property type="interactions" value="5"/>
</dbReference>
<dbReference type="ComplexPortal" id="CPX-1094">
    <property type="entry name" value="YgjD-YeaZ-YjeE complex"/>
</dbReference>
<dbReference type="DIP" id="DIP-11804N"/>
<dbReference type="FunCoup" id="P76256">
    <property type="interactions" value="496"/>
</dbReference>
<dbReference type="IntAct" id="P76256">
    <property type="interactions" value="12"/>
</dbReference>
<dbReference type="STRING" id="511145.b1807"/>
<dbReference type="jPOST" id="P76256"/>
<dbReference type="PaxDb" id="511145-b1807"/>
<dbReference type="EnsemblBacteria" id="AAC74877">
    <property type="protein sequence ID" value="AAC74877"/>
    <property type="gene ID" value="b1807"/>
</dbReference>
<dbReference type="GeneID" id="946304"/>
<dbReference type="KEGG" id="ecj:JW1796"/>
<dbReference type="KEGG" id="eco:b1807"/>
<dbReference type="KEGG" id="ecoc:C3026_10295"/>
<dbReference type="PATRIC" id="fig|1411691.4.peg.446"/>
<dbReference type="EchoBASE" id="EB3285"/>
<dbReference type="eggNOG" id="COG1214">
    <property type="taxonomic scope" value="Bacteria"/>
</dbReference>
<dbReference type="HOGENOM" id="CLU_064886_2_0_6"/>
<dbReference type="InParanoid" id="P76256"/>
<dbReference type="OMA" id="DEVYWGC"/>
<dbReference type="OrthoDB" id="9809995at2"/>
<dbReference type="PhylomeDB" id="P76256"/>
<dbReference type="BioCyc" id="EcoCyc:G6991-MONOMER"/>
<dbReference type="BioCyc" id="MetaCyc:G6991-MONOMER"/>
<dbReference type="EvolutionaryTrace" id="P76256"/>
<dbReference type="PRO" id="PR:P76256"/>
<dbReference type="Proteomes" id="UP000000625">
    <property type="component" value="Chromosome"/>
</dbReference>
<dbReference type="GO" id="GO:0005829">
    <property type="term" value="C:cytosol"/>
    <property type="evidence" value="ECO:0000314"/>
    <property type="project" value="EcoCyc"/>
</dbReference>
<dbReference type="GO" id="GO:0000408">
    <property type="term" value="C:EKC/KEOPS complex"/>
    <property type="evidence" value="ECO:0000353"/>
    <property type="project" value="ComplexPortal"/>
</dbReference>
<dbReference type="GO" id="GO:0042802">
    <property type="term" value="F:identical protein binding"/>
    <property type="evidence" value="ECO:0000314"/>
    <property type="project" value="EcoCyc"/>
</dbReference>
<dbReference type="GO" id="GO:0008237">
    <property type="term" value="F:metallopeptidase activity"/>
    <property type="evidence" value="ECO:0000314"/>
    <property type="project" value="EcoCyc"/>
</dbReference>
<dbReference type="GO" id="GO:1990145">
    <property type="term" value="P:maintenance of translational fidelity"/>
    <property type="evidence" value="ECO:0000303"/>
    <property type="project" value="ComplexPortal"/>
</dbReference>
<dbReference type="GO" id="GO:0002949">
    <property type="term" value="P:tRNA threonylcarbamoyladenosine modification"/>
    <property type="evidence" value="ECO:0000314"/>
    <property type="project" value="ComplexPortal"/>
</dbReference>
<dbReference type="CDD" id="cd24032">
    <property type="entry name" value="ASKHA_NBD_TsaB"/>
    <property type="match status" value="1"/>
</dbReference>
<dbReference type="FunFam" id="3.30.420.40:FF:000119">
    <property type="entry name" value="tRNA threonylcarbamoyladenosine biosynthesis protein TsaB"/>
    <property type="match status" value="1"/>
</dbReference>
<dbReference type="Gene3D" id="3.30.420.40">
    <property type="match status" value="2"/>
</dbReference>
<dbReference type="InterPro" id="IPR043129">
    <property type="entry name" value="ATPase_NBD"/>
</dbReference>
<dbReference type="InterPro" id="IPR000905">
    <property type="entry name" value="Gcp-like_dom"/>
</dbReference>
<dbReference type="InterPro" id="IPR022496">
    <property type="entry name" value="T6A_TsaB"/>
</dbReference>
<dbReference type="NCBIfam" id="TIGR03725">
    <property type="entry name" value="T6A_YeaZ"/>
    <property type="match status" value="1"/>
</dbReference>
<dbReference type="PANTHER" id="PTHR11735">
    <property type="entry name" value="TRNA N6-ADENOSINE THREONYLCARBAMOYLTRANSFERASE"/>
    <property type="match status" value="1"/>
</dbReference>
<dbReference type="PANTHER" id="PTHR11735:SF11">
    <property type="entry name" value="TRNA THREONYLCARBAMOYLADENOSINE BIOSYNTHESIS PROTEIN TSAB"/>
    <property type="match status" value="1"/>
</dbReference>
<dbReference type="Pfam" id="PF00814">
    <property type="entry name" value="TsaD"/>
    <property type="match status" value="1"/>
</dbReference>
<dbReference type="SUPFAM" id="SSF53067">
    <property type="entry name" value="Actin-like ATPase domain"/>
    <property type="match status" value="2"/>
</dbReference>
<protein>
    <recommendedName>
        <fullName>tRNA threonylcarbamoyladenosine biosynthesis protein TsaB</fullName>
    </recommendedName>
    <alternativeName>
        <fullName>t(6)A37 threonylcarbamoyladenosine biosynthesis protein TsaB</fullName>
    </alternativeName>
</protein>
<feature type="chain" id="PRO_0000096990" description="tRNA threonylcarbamoyladenosine biosynthesis protein TsaB">
    <location>
        <begin position="1"/>
        <end position="231"/>
    </location>
</feature>
<feature type="strand" evidence="6">
    <location>
        <begin position="2"/>
        <end position="7"/>
    </location>
</feature>
<feature type="strand" evidence="6">
    <location>
        <begin position="9"/>
        <end position="19"/>
    </location>
</feature>
<feature type="strand" evidence="6">
    <location>
        <begin position="22"/>
        <end position="29"/>
    </location>
</feature>
<feature type="turn" evidence="7">
    <location>
        <begin position="31"/>
        <end position="33"/>
    </location>
</feature>
<feature type="turn" evidence="6">
    <location>
        <begin position="34"/>
        <end position="37"/>
    </location>
</feature>
<feature type="helix" evidence="6">
    <location>
        <begin position="38"/>
        <end position="48"/>
    </location>
</feature>
<feature type="helix" evidence="6">
    <location>
        <begin position="53"/>
        <end position="55"/>
    </location>
</feature>
<feature type="strand" evidence="6">
    <location>
        <begin position="58"/>
        <end position="66"/>
    </location>
</feature>
<feature type="helix" evidence="6">
    <location>
        <begin position="68"/>
        <end position="84"/>
    </location>
</feature>
<feature type="strand" evidence="6">
    <location>
        <begin position="89"/>
        <end position="93"/>
    </location>
</feature>
<feature type="helix" evidence="6">
    <location>
        <begin position="94"/>
        <end position="105"/>
    </location>
</feature>
<feature type="strand" evidence="6">
    <location>
        <begin position="109"/>
        <end position="116"/>
    </location>
</feature>
<feature type="strand" evidence="6">
    <location>
        <begin position="118"/>
        <end position="120"/>
    </location>
</feature>
<feature type="strand" evidence="6">
    <location>
        <begin position="122"/>
        <end position="129"/>
    </location>
</feature>
<feature type="helix" evidence="6">
    <location>
        <begin position="138"/>
        <end position="140"/>
    </location>
</feature>
<feature type="strand" evidence="6">
    <location>
        <begin position="142"/>
        <end position="144"/>
    </location>
</feature>
<feature type="helix" evidence="6">
    <location>
        <begin position="146"/>
        <end position="153"/>
    </location>
</feature>
<feature type="strand" evidence="6">
    <location>
        <begin position="158"/>
        <end position="164"/>
    </location>
</feature>
<feature type="helix" evidence="6">
    <location>
        <begin position="165"/>
        <end position="169"/>
    </location>
</feature>
<feature type="turn" evidence="7">
    <location>
        <begin position="171"/>
        <end position="176"/>
    </location>
</feature>
<feature type="strand" evidence="6">
    <location>
        <begin position="178"/>
        <end position="183"/>
    </location>
</feature>
<feature type="helix" evidence="6">
    <location>
        <begin position="191"/>
        <end position="193"/>
    </location>
</feature>
<feature type="helix" evidence="6">
    <location>
        <begin position="194"/>
        <end position="204"/>
    </location>
</feature>
<feature type="helix" evidence="6">
    <location>
        <begin position="210"/>
        <end position="212"/>
    </location>
</feature>
<comment type="function">
    <text evidence="1 3">Required for the formation of a threonylcarbamoyl group on adenosine at position 37 (t(6)A37) in tRNAs that read codons beginning with adenine. Is probably involved in the transfer of the threonylcarbamoyl moiety of threonylcarbamoyl-AMP (TC-AMP) to the N6 group of A37, together with TsaD and TsaE. TsaB seems to play an indirect role in the t(6)A biosynthesis pathway, possibly in regulating the core enzymatic function of TsaD. In fact, can act as a protease that specifically degrades TsaD in vitro; therefore TsaB may post-translationally regulate cellular pools of TsaD via proteolytic degradation. Does not show sialoglycoprotease activity against glycophorin A.</text>
</comment>
<comment type="subunit">
    <text evidence="1 2 3">Homodimer. Interacts with TsaD and TsaE in a mutually exclusive manner; TsaD is the preferred partner. Also interacts with TsaC.</text>
</comment>
<comment type="interaction">
    <interactant intactId="EBI-560669">
        <id>P76256</id>
    </interactant>
    <interactant intactId="EBI-561994">
        <id>P05852</id>
        <label>tsaD</label>
    </interactant>
    <organismsDiffer>false</organismsDiffer>
    <experiments>8</experiments>
</comment>
<comment type="subcellular location">
    <subcellularLocation>
        <location evidence="1">Cytoplasm</location>
    </subcellularLocation>
</comment>
<comment type="disruption phenotype">
    <text evidence="1">Appears essential for growth, since no null mutants can be obtained. Conditional depletion of this gene leads to enlarged cells, which display highly condensed nucleoids. The TsaB depletion phenotype is suppressed by overexpressing the response regulator RstA.</text>
</comment>
<comment type="miscellaneous">
    <text evidence="5">TsaBCDE are necessary and sufficient for tRNA(NNU) t(6)A37 threonylcarbamoyladenosine modification in vitro in E.coli.</text>
</comment>
<comment type="similarity">
    <text evidence="4">Belongs to the KAE1 / TsaD family. TsaB subfamily.</text>
</comment>
<comment type="caution">
    <text evidence="4">The well-known t(6)A modification appears to be a hydrolyzed artifact of natural cyclic t(6)A (ct(6)A) that occurs during the preparation and handling of tRNA in E.coli and many other species (PubMed:23242255). In these species, the t(6)A modification is processed further by dehydration into ct(6)A, a reaction catalyzed by TcdA.</text>
</comment>
<sequence>MRILAIDTATEACSVALWNDGTVNAHFELCPREHTQRILPMVQDILTTSGTSLTDINALAYGRGPGSFTGVRIGIGIAQGLALGAELPMIGVSTLMTMAQGAWRKNGATRVLAAIDARMGEVYWAEYQRDENGIWHGEETEAVLKPEIVHERMQQLSGEWVTVGTGWQAWPDLGKESGLVLRDGEVLLPAAEDMLPIACQMFAEGKTVAVEHAEPVYLRNNVAWKKLPGKE</sequence>
<gene>
    <name type="primary">tsaB</name>
    <name type="synonym">yeaZ</name>
    <name type="ordered locus">b1807</name>
    <name type="ordered locus">JW1796</name>
</gene>